<name>RL5_SALPC</name>
<evidence type="ECO:0000255" key="1">
    <source>
        <dbReference type="HAMAP-Rule" id="MF_01333"/>
    </source>
</evidence>
<evidence type="ECO:0000305" key="2"/>
<dbReference type="EMBL" id="CP000857">
    <property type="protein sequence ID" value="ACN47581.1"/>
    <property type="molecule type" value="Genomic_DNA"/>
</dbReference>
<dbReference type="RefSeq" id="WP_001096206.1">
    <property type="nucleotide sequence ID" value="NC_012125.1"/>
</dbReference>
<dbReference type="SMR" id="C0Q0A4"/>
<dbReference type="GeneID" id="93751944"/>
<dbReference type="KEGG" id="sei:SPC_3497"/>
<dbReference type="HOGENOM" id="CLU_061015_2_1_6"/>
<dbReference type="Proteomes" id="UP000001599">
    <property type="component" value="Chromosome"/>
</dbReference>
<dbReference type="GO" id="GO:1990904">
    <property type="term" value="C:ribonucleoprotein complex"/>
    <property type="evidence" value="ECO:0007669"/>
    <property type="project" value="UniProtKB-KW"/>
</dbReference>
<dbReference type="GO" id="GO:0005840">
    <property type="term" value="C:ribosome"/>
    <property type="evidence" value="ECO:0007669"/>
    <property type="project" value="UniProtKB-KW"/>
</dbReference>
<dbReference type="GO" id="GO:0019843">
    <property type="term" value="F:rRNA binding"/>
    <property type="evidence" value="ECO:0007669"/>
    <property type="project" value="UniProtKB-UniRule"/>
</dbReference>
<dbReference type="GO" id="GO:0003735">
    <property type="term" value="F:structural constituent of ribosome"/>
    <property type="evidence" value="ECO:0007669"/>
    <property type="project" value="InterPro"/>
</dbReference>
<dbReference type="GO" id="GO:0000049">
    <property type="term" value="F:tRNA binding"/>
    <property type="evidence" value="ECO:0007669"/>
    <property type="project" value="UniProtKB-UniRule"/>
</dbReference>
<dbReference type="GO" id="GO:0006412">
    <property type="term" value="P:translation"/>
    <property type="evidence" value="ECO:0007669"/>
    <property type="project" value="UniProtKB-UniRule"/>
</dbReference>
<dbReference type="FunFam" id="3.30.1440.10:FF:000001">
    <property type="entry name" value="50S ribosomal protein L5"/>
    <property type="match status" value="1"/>
</dbReference>
<dbReference type="Gene3D" id="3.30.1440.10">
    <property type="match status" value="1"/>
</dbReference>
<dbReference type="HAMAP" id="MF_01333_B">
    <property type="entry name" value="Ribosomal_uL5_B"/>
    <property type="match status" value="1"/>
</dbReference>
<dbReference type="InterPro" id="IPR002132">
    <property type="entry name" value="Ribosomal_uL5"/>
</dbReference>
<dbReference type="InterPro" id="IPR020930">
    <property type="entry name" value="Ribosomal_uL5_bac-type"/>
</dbReference>
<dbReference type="InterPro" id="IPR031309">
    <property type="entry name" value="Ribosomal_uL5_C"/>
</dbReference>
<dbReference type="InterPro" id="IPR020929">
    <property type="entry name" value="Ribosomal_uL5_CS"/>
</dbReference>
<dbReference type="InterPro" id="IPR022803">
    <property type="entry name" value="Ribosomal_uL5_dom_sf"/>
</dbReference>
<dbReference type="InterPro" id="IPR031310">
    <property type="entry name" value="Ribosomal_uL5_N"/>
</dbReference>
<dbReference type="NCBIfam" id="NF000585">
    <property type="entry name" value="PRK00010.1"/>
    <property type="match status" value="1"/>
</dbReference>
<dbReference type="PANTHER" id="PTHR11994">
    <property type="entry name" value="60S RIBOSOMAL PROTEIN L11-RELATED"/>
    <property type="match status" value="1"/>
</dbReference>
<dbReference type="Pfam" id="PF00281">
    <property type="entry name" value="Ribosomal_L5"/>
    <property type="match status" value="1"/>
</dbReference>
<dbReference type="Pfam" id="PF00673">
    <property type="entry name" value="Ribosomal_L5_C"/>
    <property type="match status" value="1"/>
</dbReference>
<dbReference type="PIRSF" id="PIRSF002161">
    <property type="entry name" value="Ribosomal_L5"/>
    <property type="match status" value="1"/>
</dbReference>
<dbReference type="SUPFAM" id="SSF55282">
    <property type="entry name" value="RL5-like"/>
    <property type="match status" value="1"/>
</dbReference>
<dbReference type="PROSITE" id="PS00358">
    <property type="entry name" value="RIBOSOMAL_L5"/>
    <property type="match status" value="1"/>
</dbReference>
<organism>
    <name type="scientific">Salmonella paratyphi C (strain RKS4594)</name>
    <dbReference type="NCBI Taxonomy" id="476213"/>
    <lineage>
        <taxon>Bacteria</taxon>
        <taxon>Pseudomonadati</taxon>
        <taxon>Pseudomonadota</taxon>
        <taxon>Gammaproteobacteria</taxon>
        <taxon>Enterobacterales</taxon>
        <taxon>Enterobacteriaceae</taxon>
        <taxon>Salmonella</taxon>
    </lineage>
</organism>
<accession>C0Q0A4</accession>
<proteinExistence type="inferred from homology"/>
<reference key="1">
    <citation type="journal article" date="2009" name="PLoS ONE">
        <title>Salmonella paratyphi C: genetic divergence from Salmonella choleraesuis and pathogenic convergence with Salmonella typhi.</title>
        <authorList>
            <person name="Liu W.-Q."/>
            <person name="Feng Y."/>
            <person name="Wang Y."/>
            <person name="Zou Q.-H."/>
            <person name="Chen F."/>
            <person name="Guo J.-T."/>
            <person name="Peng Y.-H."/>
            <person name="Jin Y."/>
            <person name="Li Y.-G."/>
            <person name="Hu S.-N."/>
            <person name="Johnston R.N."/>
            <person name="Liu G.-R."/>
            <person name="Liu S.-L."/>
        </authorList>
    </citation>
    <scope>NUCLEOTIDE SEQUENCE [LARGE SCALE GENOMIC DNA]</scope>
    <source>
        <strain>RKS4594</strain>
    </source>
</reference>
<gene>
    <name evidence="1" type="primary">rplE</name>
    <name type="ordered locus">SPC_3497</name>
</gene>
<sequence length="179" mass="20318">MAKLHDYYKDEVVNKLMTEFNYNSVMQVPRVEKITLNMGVGEAIADKKLLDNAAADLTAISGQKPLITKARKSVAGFKIRQGYPIGCKVTLRGERMWEFFERLITIAVPRIRDFRGLSAKSFDGRGNYSMGVREQIIFPEIDYDKVDRVRGLDITITTTAKSDEEGRALLAAFDFPFRK</sequence>
<comment type="function">
    <text evidence="1">This is one of the proteins that bind and probably mediate the attachment of the 5S RNA into the large ribosomal subunit, where it forms part of the central protuberance. In the 70S ribosome it contacts protein S13 of the 30S subunit (bridge B1b), connecting the 2 subunits; this bridge is implicated in subunit movement. Contacts the P site tRNA; the 5S rRNA and some of its associated proteins might help stabilize positioning of ribosome-bound tRNAs.</text>
</comment>
<comment type="subunit">
    <text evidence="1">Part of the 50S ribosomal subunit; part of the 5S rRNA/L5/L18/L25 subcomplex. Contacts the 5S rRNA and the P site tRNA. Forms a bridge to the 30S subunit in the 70S ribosome.</text>
</comment>
<comment type="similarity">
    <text evidence="1">Belongs to the universal ribosomal protein uL5 family.</text>
</comment>
<protein>
    <recommendedName>
        <fullName evidence="1">Large ribosomal subunit protein uL5</fullName>
    </recommendedName>
    <alternativeName>
        <fullName evidence="2">50S ribosomal protein L5</fullName>
    </alternativeName>
</protein>
<feature type="chain" id="PRO_1000166146" description="Large ribosomal subunit protein uL5">
    <location>
        <begin position="1"/>
        <end position="179"/>
    </location>
</feature>
<keyword id="KW-0687">Ribonucleoprotein</keyword>
<keyword id="KW-0689">Ribosomal protein</keyword>
<keyword id="KW-0694">RNA-binding</keyword>
<keyword id="KW-0699">rRNA-binding</keyword>
<keyword id="KW-0820">tRNA-binding</keyword>